<protein>
    <recommendedName>
        <fullName evidence="1">UPF0482 protein Ent638_1930</fullName>
    </recommendedName>
</protein>
<dbReference type="EMBL" id="CP000653">
    <property type="protein sequence ID" value="ABP60606.1"/>
    <property type="molecule type" value="Genomic_DNA"/>
</dbReference>
<dbReference type="RefSeq" id="WP_012017321.1">
    <property type="nucleotide sequence ID" value="NC_009436.1"/>
</dbReference>
<dbReference type="STRING" id="399742.Ent638_1930"/>
<dbReference type="KEGG" id="ent:Ent638_1930"/>
<dbReference type="eggNOG" id="ENOG5032SRB">
    <property type="taxonomic scope" value="Bacteria"/>
</dbReference>
<dbReference type="HOGENOM" id="CLU_167574_0_0_6"/>
<dbReference type="OrthoDB" id="6455281at2"/>
<dbReference type="Proteomes" id="UP000000230">
    <property type="component" value="Chromosome"/>
</dbReference>
<dbReference type="HAMAP" id="MF_01581">
    <property type="entry name" value="UPF0482"/>
    <property type="match status" value="1"/>
</dbReference>
<dbReference type="InterPro" id="IPR009700">
    <property type="entry name" value="DUF1283"/>
</dbReference>
<dbReference type="NCBIfam" id="NF010180">
    <property type="entry name" value="PRK13659.1"/>
    <property type="match status" value="1"/>
</dbReference>
<dbReference type="Pfam" id="PF06932">
    <property type="entry name" value="DUF1283"/>
    <property type="match status" value="1"/>
</dbReference>
<accession>A4WA76</accession>
<organism>
    <name type="scientific">Enterobacter sp. (strain 638)</name>
    <dbReference type="NCBI Taxonomy" id="399742"/>
    <lineage>
        <taxon>Bacteria</taxon>
        <taxon>Pseudomonadati</taxon>
        <taxon>Pseudomonadota</taxon>
        <taxon>Gammaproteobacteria</taxon>
        <taxon>Enterobacterales</taxon>
        <taxon>Enterobacteriaceae</taxon>
        <taxon>Enterobacter</taxon>
    </lineage>
</organism>
<name>Y1930_ENT38</name>
<comment type="similarity">
    <text evidence="1">Belongs to the UPF0482 family.</text>
</comment>
<sequence length="112" mass="12718">MTTLRKRLCLATLLSLTALAFTAPVSAQTSKLIIESGDSAQSRQNAAMDKEQWNDTRNLRQKVNKRAEKEWDKEDVAFDSRDKCQQSANVNAYWEANTLRCLDRRTGRTVAP</sequence>
<gene>
    <name type="ordered locus">Ent638_1930</name>
</gene>
<feature type="signal peptide" evidence="1">
    <location>
        <begin position="1"/>
        <end position="27"/>
    </location>
</feature>
<feature type="chain" id="PRO_5000237908" description="UPF0482 protein Ent638_1930">
    <location>
        <begin position="28"/>
        <end position="112"/>
    </location>
</feature>
<proteinExistence type="inferred from homology"/>
<keyword id="KW-0732">Signal</keyword>
<evidence type="ECO:0000255" key="1">
    <source>
        <dbReference type="HAMAP-Rule" id="MF_01581"/>
    </source>
</evidence>
<reference key="1">
    <citation type="journal article" date="2010" name="PLoS Genet.">
        <title>Genome sequence of the plant growth promoting endophytic bacterium Enterobacter sp. 638.</title>
        <authorList>
            <person name="Taghavi S."/>
            <person name="van der Lelie D."/>
            <person name="Hoffman A."/>
            <person name="Zhang Y.B."/>
            <person name="Walla M.D."/>
            <person name="Vangronsveld J."/>
            <person name="Newman L."/>
            <person name="Monchy S."/>
        </authorList>
    </citation>
    <scope>NUCLEOTIDE SEQUENCE [LARGE SCALE GENOMIC DNA]</scope>
    <source>
        <strain>638</strain>
    </source>
</reference>